<comment type="function">
    <text evidence="1">Plays a role in the inhibition of host innate immunity by inducing the degradation of key host factors required to activate interferon production such as IRF3, IRF5 or IRF7. Associates with components of cullin RING ligases (CRLs) including CUL1 or CUL3, which are essential multisubunit ubiquitination complexes, to modulate their activities. Recognizes the host NF-kappa-B regulator BTRC through the presence of a DSGXS motif in the C-terminal substrate recognition domain.</text>
</comment>
<comment type="subunit">
    <text evidence="1">Interacts (via C-terminus) with host IRF3; this interaction leads to IRF3 degradation. Interacts with host IRF7; this interaction leads to IRF7 degradation. Interacts with host CUL1 and CUL3. Interacts with host BTRC.</text>
</comment>
<comment type="subcellular location">
    <subcellularLocation>
        <location evidence="1">Host cytoplasm</location>
        <location evidence="1">Host cytoskeleton</location>
    </subcellularLocation>
</comment>
<comment type="domain">
    <text evidence="1">The integrity of the zinc-binding domain in NSP1 is important for degradation of host IRF3.</text>
</comment>
<comment type="domain">
    <text evidence="1">The pLxIS motif targets host IRF3 for degradation; however phosphorylation of NSP1 pLxIS motif is not required for its activity.</text>
</comment>
<comment type="PTM">
    <text evidence="1">The C-terminal region is phosphorylated by host CKII/CSNK2A1. Phosphorylation of the DSGXS motif is essential for host NF-kappa-B inhibition.</text>
</comment>
<comment type="similarity">
    <text evidence="1">Belongs to the rotavirus NSP1 family.</text>
</comment>
<feature type="chain" id="PRO_0000369092" description="Non-structural protein 1">
    <location>
        <begin position="1"/>
        <end position="486"/>
    </location>
</feature>
<feature type="region of interest" description="RNA-binding" evidence="1">
    <location>
        <begin position="1"/>
        <end position="81"/>
    </location>
</feature>
<feature type="region of interest" description="Zinc-binding domain" evidence="1">
    <location>
        <begin position="42"/>
        <end position="79"/>
    </location>
</feature>
<feature type="region of interest" description="Important for cytoskeleton localization" evidence="1">
    <location>
        <begin position="82"/>
        <end position="176"/>
    </location>
</feature>
<feature type="region of interest" description="Interaction with host IRF3" evidence="1">
    <location>
        <begin position="317"/>
        <end position="486"/>
    </location>
</feature>
<feature type="short sequence motif" description="IKBKB-like degron (ILD) motif" evidence="1">
    <location>
        <begin position="479"/>
        <end position="483"/>
    </location>
</feature>
<feature type="short sequence motif" description="pLxIS motif" evidence="1">
    <location>
        <begin position="480"/>
        <end position="483"/>
    </location>
</feature>
<reference key="1">
    <citation type="journal article" date="1994" name="Virology">
        <title>Comparison of the rotavirus nonstructural protein NSP1 (NS53) from different species by sequence analysis and northern blot hybridization.</title>
        <authorList>
            <person name="Dunn S.J."/>
            <person name="Cross T.L."/>
            <person name="Greenberg H.B."/>
        </authorList>
    </citation>
    <scope>NUCLEOTIDE SEQUENCE [GENOMIC RNA]</scope>
</reference>
<protein>
    <recommendedName>
        <fullName evidence="1">Non-structural protein 1</fullName>
        <shortName evidence="1">NSP1</shortName>
    </recommendedName>
    <alternativeName>
        <fullName evidence="1">NCVP2</fullName>
    </alternativeName>
    <alternativeName>
        <fullName evidence="1">Non-structural RNA-binding protein 53</fullName>
        <shortName evidence="1">NS53</shortName>
    </alternativeName>
</protein>
<evidence type="ECO:0000255" key="1">
    <source>
        <dbReference type="HAMAP-Rule" id="MF_04088"/>
    </source>
</evidence>
<proteinExistence type="inferred from homology"/>
<keyword id="KW-1035">Host cytoplasm</keyword>
<keyword id="KW-1037">Host cytoskeleton</keyword>
<keyword id="KW-0945">Host-virus interaction</keyword>
<keyword id="KW-1090">Inhibition of host innate immune response by virus</keyword>
<keyword id="KW-1092">Inhibition of host IRF3 by virus</keyword>
<keyword id="KW-1093">Inhibition of host IRF7 by virus</keyword>
<keyword id="KW-1100">Inhibition of host NF-kappa-B by virus</keyword>
<keyword id="KW-1113">Inhibition of host RLR pathway by virus</keyword>
<keyword id="KW-0922">Interferon antiviral system evasion</keyword>
<keyword id="KW-0479">Metal-binding</keyword>
<keyword id="KW-0597">Phosphoprotein</keyword>
<keyword id="KW-0694">RNA-binding</keyword>
<keyword id="KW-0899">Viral immunoevasion</keyword>
<organismHost>
    <name type="scientific">Sus scrofa</name>
    <name type="common">Pig</name>
    <dbReference type="NCBI Taxonomy" id="9823"/>
</organismHost>
<accession>Q84939</accession>
<name>NSP1_ROTPG</name>
<organism>
    <name type="scientific">Rotavirus A (strain RVA/Pig/United States/Gottfried/1983/G4P2B[6])</name>
    <name type="common">RV-A</name>
    <dbReference type="NCBI Taxonomy" id="10917"/>
    <lineage>
        <taxon>Viruses</taxon>
        <taxon>Riboviria</taxon>
        <taxon>Orthornavirae</taxon>
        <taxon>Duplornaviricota</taxon>
        <taxon>Resentoviricetes</taxon>
        <taxon>Reovirales</taxon>
        <taxon>Sedoreoviridae</taxon>
        <taxon>Rotavirus</taxon>
        <taxon>Rotavirus A</taxon>
    </lineage>
</organism>
<dbReference type="EMBL" id="U08431">
    <property type="protein sequence ID" value="AAA50494.1"/>
    <property type="molecule type" value="Genomic_RNA"/>
</dbReference>
<dbReference type="GO" id="GO:0030430">
    <property type="term" value="C:host cell cytoplasm"/>
    <property type="evidence" value="ECO:0007669"/>
    <property type="project" value="UniProtKB-UniRule"/>
</dbReference>
<dbReference type="GO" id="GO:0044163">
    <property type="term" value="C:host cytoskeleton"/>
    <property type="evidence" value="ECO:0007669"/>
    <property type="project" value="UniProtKB-SubCell"/>
</dbReference>
<dbReference type="GO" id="GO:0046872">
    <property type="term" value="F:metal ion binding"/>
    <property type="evidence" value="ECO:0007669"/>
    <property type="project" value="UniProtKB-UniRule"/>
</dbReference>
<dbReference type="GO" id="GO:0003723">
    <property type="term" value="F:RNA binding"/>
    <property type="evidence" value="ECO:0007669"/>
    <property type="project" value="UniProtKB-UniRule"/>
</dbReference>
<dbReference type="GO" id="GO:0039548">
    <property type="term" value="P:symbiont-mediated suppression of host cytoplasmic pattern recognition receptor signaling pathway via inhibition of IRF3 activity"/>
    <property type="evidence" value="ECO:0007669"/>
    <property type="project" value="UniProtKB-UniRule"/>
</dbReference>
<dbReference type="GO" id="GO:0039557">
    <property type="term" value="P:symbiont-mediated suppression of host cytoplasmic pattern recognition receptor signaling pathway via inhibition of IRF7 activity"/>
    <property type="evidence" value="ECO:0007669"/>
    <property type="project" value="UniProtKB-UniRule"/>
</dbReference>
<dbReference type="GO" id="GO:0085034">
    <property type="term" value="P:symbiont-mediated suppression of host NF-kappaB cascade"/>
    <property type="evidence" value="ECO:0007669"/>
    <property type="project" value="UniProtKB-UniRule"/>
</dbReference>
<dbReference type="HAMAP" id="MF_04088">
    <property type="entry name" value="ROTA_NSP1"/>
    <property type="match status" value="1"/>
</dbReference>
<dbReference type="InterPro" id="IPR002148">
    <property type="entry name" value="Rotavirus_NSP1"/>
</dbReference>
<dbReference type="Pfam" id="PF00981">
    <property type="entry name" value="Rota_NS53"/>
    <property type="match status" value="1"/>
</dbReference>
<sequence>MATFKDACYYYKRLNKLNHAVLKLGVNDAWRPSPPTKYKGWCLDCCQHTDLTYCRGCSIYHVCQWCNQYGRCFLDDEPHLLRMRTFKNNVTKEDLANLIDMYNVLFPVNQKTVNKFINNTKQHKCRNEYVPQWYNHLLMPITLQSLSIELDGDTYYIFGYYDNMKNINQTPFSFVNLIDMYDKLLLDDVNFNRMSFLPLILQQEYALRYFSKSRFISEEKRQINHSHFSINILENLHNPNFKIQITRNCSTMSVRWNEACKLVKDVGTYFDILKTSHVEFYDVSPRCRMFTQHKLKAVSKVIKPNYVTSNHRALATEVHNCRWCSVNNNLIVWNDFRLRNICDNILNFIRALIKSNTGIGHCSSQERIHIYIRDVFDVCDESKWNASVVGIFNCLEPVELGNAHYILLNHEVNWDVANVLIQNIGKIPQILTLNDVITALHSMIYDWFDVRYMRNTPTTTFTVDKLKQLCARRKTVDYDSGVSDVE</sequence>